<gene>
    <name evidence="1" type="primary">murG</name>
    <name type="ordered locus">SEN0129</name>
</gene>
<comment type="function">
    <text evidence="1">Cell wall formation. Catalyzes the transfer of a GlcNAc subunit on undecaprenyl-pyrophosphoryl-MurNAc-pentapeptide (lipid intermediate I) to form undecaprenyl-pyrophosphoryl-MurNAc-(pentapeptide)GlcNAc (lipid intermediate II).</text>
</comment>
<comment type="catalytic activity">
    <reaction evidence="1">
        <text>di-trans,octa-cis-undecaprenyl diphospho-N-acetyl-alpha-D-muramoyl-L-alanyl-D-glutamyl-meso-2,6-diaminopimeloyl-D-alanyl-D-alanine + UDP-N-acetyl-alpha-D-glucosamine = di-trans,octa-cis-undecaprenyl diphospho-[N-acetyl-alpha-D-glucosaminyl-(1-&gt;4)]-N-acetyl-alpha-D-muramoyl-L-alanyl-D-glutamyl-meso-2,6-diaminopimeloyl-D-alanyl-D-alanine + UDP + H(+)</text>
        <dbReference type="Rhea" id="RHEA:31227"/>
        <dbReference type="ChEBI" id="CHEBI:15378"/>
        <dbReference type="ChEBI" id="CHEBI:57705"/>
        <dbReference type="ChEBI" id="CHEBI:58223"/>
        <dbReference type="ChEBI" id="CHEBI:61387"/>
        <dbReference type="ChEBI" id="CHEBI:61388"/>
        <dbReference type="EC" id="2.4.1.227"/>
    </reaction>
</comment>
<comment type="pathway">
    <text evidence="1">Cell wall biogenesis; peptidoglycan biosynthesis.</text>
</comment>
<comment type="subcellular location">
    <subcellularLocation>
        <location evidence="1">Cell inner membrane</location>
        <topology evidence="1">Peripheral membrane protein</topology>
        <orientation evidence="1">Cytoplasmic side</orientation>
    </subcellularLocation>
</comment>
<comment type="similarity">
    <text evidence="1">Belongs to the glycosyltransferase 28 family. MurG subfamily.</text>
</comment>
<proteinExistence type="inferred from homology"/>
<name>MURG_SALEP</name>
<keyword id="KW-0131">Cell cycle</keyword>
<keyword id="KW-0132">Cell division</keyword>
<keyword id="KW-0997">Cell inner membrane</keyword>
<keyword id="KW-1003">Cell membrane</keyword>
<keyword id="KW-0133">Cell shape</keyword>
<keyword id="KW-0961">Cell wall biogenesis/degradation</keyword>
<keyword id="KW-0328">Glycosyltransferase</keyword>
<keyword id="KW-0472">Membrane</keyword>
<keyword id="KW-0573">Peptidoglycan synthesis</keyword>
<keyword id="KW-0808">Transferase</keyword>
<protein>
    <recommendedName>
        <fullName evidence="1">UDP-N-acetylglucosamine--N-acetylmuramyl-(pentapeptide) pyrophosphoryl-undecaprenol N-acetylglucosamine transferase</fullName>
        <ecNumber evidence="1">2.4.1.227</ecNumber>
    </recommendedName>
    <alternativeName>
        <fullName evidence="1">Undecaprenyl-PP-MurNAc-pentapeptide-UDPGlcNAc GlcNAc transferase</fullName>
    </alternativeName>
</protein>
<feature type="chain" id="PRO_1000090467" description="UDP-N-acetylglucosamine--N-acetylmuramyl-(pentapeptide) pyrophosphoryl-undecaprenol N-acetylglucosamine transferase">
    <location>
        <begin position="1"/>
        <end position="355"/>
    </location>
</feature>
<feature type="binding site" evidence="1">
    <location>
        <begin position="15"/>
        <end position="17"/>
    </location>
    <ligand>
        <name>UDP-N-acetyl-alpha-D-glucosamine</name>
        <dbReference type="ChEBI" id="CHEBI:57705"/>
    </ligand>
</feature>
<feature type="binding site" evidence="1">
    <location>
        <position position="127"/>
    </location>
    <ligand>
        <name>UDP-N-acetyl-alpha-D-glucosamine</name>
        <dbReference type="ChEBI" id="CHEBI:57705"/>
    </ligand>
</feature>
<feature type="binding site" evidence="1">
    <location>
        <position position="163"/>
    </location>
    <ligand>
        <name>UDP-N-acetyl-alpha-D-glucosamine</name>
        <dbReference type="ChEBI" id="CHEBI:57705"/>
    </ligand>
</feature>
<feature type="binding site" evidence="1">
    <location>
        <position position="191"/>
    </location>
    <ligand>
        <name>UDP-N-acetyl-alpha-D-glucosamine</name>
        <dbReference type="ChEBI" id="CHEBI:57705"/>
    </ligand>
</feature>
<feature type="binding site" evidence="1">
    <location>
        <position position="244"/>
    </location>
    <ligand>
        <name>UDP-N-acetyl-alpha-D-glucosamine</name>
        <dbReference type="ChEBI" id="CHEBI:57705"/>
    </ligand>
</feature>
<feature type="binding site" evidence="1">
    <location>
        <begin position="263"/>
        <end position="268"/>
    </location>
    <ligand>
        <name>UDP-N-acetyl-alpha-D-glucosamine</name>
        <dbReference type="ChEBI" id="CHEBI:57705"/>
    </ligand>
</feature>
<feature type="binding site" evidence="1">
    <location>
        <position position="288"/>
    </location>
    <ligand>
        <name>UDP-N-acetyl-alpha-D-glucosamine</name>
        <dbReference type="ChEBI" id="CHEBI:57705"/>
    </ligand>
</feature>
<organism>
    <name type="scientific">Salmonella enteritidis PT4 (strain P125109)</name>
    <dbReference type="NCBI Taxonomy" id="550537"/>
    <lineage>
        <taxon>Bacteria</taxon>
        <taxon>Pseudomonadati</taxon>
        <taxon>Pseudomonadota</taxon>
        <taxon>Gammaproteobacteria</taxon>
        <taxon>Enterobacterales</taxon>
        <taxon>Enterobacteriaceae</taxon>
        <taxon>Salmonella</taxon>
    </lineage>
</organism>
<sequence length="355" mass="37959">MSGQPKRLMVMAGGTGGHVFPGLAVAHHLMSQGWQVRWLGTADRMEADLVPKHGIDIDFIRISGLRGKGVKALLAAPLRIFNAWRQARAIMKRFKPDVVLGMGGYVSGPGGLAAWSLGIPVVLHEQNGIAGLTNQWLAKIATTVMQAFPGAFPNAEVVGNPVRTDVLALPLPQVRLAGRDGPIRVLVVGGSQGARVLNQTMPQVAARLGDTVTIWHQSGKGVQHTVEQAYAGVGQPQHKVTEFIDDMAAAYAWADVVVCRSGALTVSEIAAAGLPAIFVPFQHKDRQQYWNALPLENAGAAKIFEQPQFTVEAVADTLAGWSREALLTMAERARAVSIPDATERVASEVSRVART</sequence>
<accession>B5R2M4</accession>
<dbReference type="EC" id="2.4.1.227" evidence="1"/>
<dbReference type="EMBL" id="AM933172">
    <property type="protein sequence ID" value="CAR31718.1"/>
    <property type="molecule type" value="Genomic_DNA"/>
</dbReference>
<dbReference type="RefSeq" id="WP_000016623.1">
    <property type="nucleotide sequence ID" value="NC_011294.1"/>
</dbReference>
<dbReference type="SMR" id="B5R2M4"/>
<dbReference type="CAZy" id="GT28">
    <property type="family name" value="Glycosyltransferase Family 28"/>
</dbReference>
<dbReference type="KEGG" id="set:SEN0129"/>
<dbReference type="HOGENOM" id="CLU_037404_2_0_6"/>
<dbReference type="UniPathway" id="UPA00219"/>
<dbReference type="Proteomes" id="UP000000613">
    <property type="component" value="Chromosome"/>
</dbReference>
<dbReference type="GO" id="GO:0005886">
    <property type="term" value="C:plasma membrane"/>
    <property type="evidence" value="ECO:0007669"/>
    <property type="project" value="UniProtKB-SubCell"/>
</dbReference>
<dbReference type="GO" id="GO:0051991">
    <property type="term" value="F:UDP-N-acetyl-D-glucosamine:N-acetylmuramoyl-L-alanyl-D-glutamyl-meso-2,6-diaminopimelyl-D-alanyl-D-alanine-diphosphoundecaprenol 4-beta-N-acetylglucosaminlytransferase activity"/>
    <property type="evidence" value="ECO:0007669"/>
    <property type="project" value="RHEA"/>
</dbReference>
<dbReference type="GO" id="GO:0050511">
    <property type="term" value="F:undecaprenyldiphospho-muramoylpentapeptide beta-N-acetylglucosaminyltransferase activity"/>
    <property type="evidence" value="ECO:0007669"/>
    <property type="project" value="UniProtKB-UniRule"/>
</dbReference>
<dbReference type="GO" id="GO:0005975">
    <property type="term" value="P:carbohydrate metabolic process"/>
    <property type="evidence" value="ECO:0007669"/>
    <property type="project" value="InterPro"/>
</dbReference>
<dbReference type="GO" id="GO:0051301">
    <property type="term" value="P:cell division"/>
    <property type="evidence" value="ECO:0007669"/>
    <property type="project" value="UniProtKB-KW"/>
</dbReference>
<dbReference type="GO" id="GO:0071555">
    <property type="term" value="P:cell wall organization"/>
    <property type="evidence" value="ECO:0007669"/>
    <property type="project" value="UniProtKB-KW"/>
</dbReference>
<dbReference type="GO" id="GO:0030259">
    <property type="term" value="P:lipid glycosylation"/>
    <property type="evidence" value="ECO:0007669"/>
    <property type="project" value="UniProtKB-UniRule"/>
</dbReference>
<dbReference type="GO" id="GO:0009252">
    <property type="term" value="P:peptidoglycan biosynthetic process"/>
    <property type="evidence" value="ECO:0007669"/>
    <property type="project" value="UniProtKB-UniRule"/>
</dbReference>
<dbReference type="GO" id="GO:0008360">
    <property type="term" value="P:regulation of cell shape"/>
    <property type="evidence" value="ECO:0007669"/>
    <property type="project" value="UniProtKB-KW"/>
</dbReference>
<dbReference type="CDD" id="cd03785">
    <property type="entry name" value="GT28_MurG"/>
    <property type="match status" value="1"/>
</dbReference>
<dbReference type="FunFam" id="3.40.50.2000:FF:000016">
    <property type="entry name" value="UDP-N-acetylglucosamine--N-acetylmuramyl-(pentapeptide) pyrophosphoryl-undecaprenol N-acetylglucosamine transferase"/>
    <property type="match status" value="1"/>
</dbReference>
<dbReference type="FunFam" id="3.40.50.2000:FF:000018">
    <property type="entry name" value="UDP-N-acetylglucosamine--N-acetylmuramyl-(pentapeptide) pyrophosphoryl-undecaprenol N-acetylglucosamine transferase"/>
    <property type="match status" value="1"/>
</dbReference>
<dbReference type="Gene3D" id="3.40.50.2000">
    <property type="entry name" value="Glycogen Phosphorylase B"/>
    <property type="match status" value="2"/>
</dbReference>
<dbReference type="HAMAP" id="MF_00033">
    <property type="entry name" value="MurG"/>
    <property type="match status" value="1"/>
</dbReference>
<dbReference type="InterPro" id="IPR006009">
    <property type="entry name" value="GlcNAc_MurG"/>
</dbReference>
<dbReference type="InterPro" id="IPR007235">
    <property type="entry name" value="Glyco_trans_28_C"/>
</dbReference>
<dbReference type="InterPro" id="IPR004276">
    <property type="entry name" value="GlycoTrans_28_N"/>
</dbReference>
<dbReference type="NCBIfam" id="TIGR01133">
    <property type="entry name" value="murG"/>
    <property type="match status" value="1"/>
</dbReference>
<dbReference type="PANTHER" id="PTHR21015:SF22">
    <property type="entry name" value="GLYCOSYLTRANSFERASE"/>
    <property type="match status" value="1"/>
</dbReference>
<dbReference type="PANTHER" id="PTHR21015">
    <property type="entry name" value="UDP-N-ACETYLGLUCOSAMINE--N-ACETYLMURAMYL-(PENTAPEPTIDE) PYROPHOSPHORYL-UNDECAPRENOL N-ACETYLGLUCOSAMINE TRANSFERASE 1"/>
    <property type="match status" value="1"/>
</dbReference>
<dbReference type="Pfam" id="PF04101">
    <property type="entry name" value="Glyco_tran_28_C"/>
    <property type="match status" value="1"/>
</dbReference>
<dbReference type="Pfam" id="PF03033">
    <property type="entry name" value="Glyco_transf_28"/>
    <property type="match status" value="1"/>
</dbReference>
<dbReference type="SUPFAM" id="SSF53756">
    <property type="entry name" value="UDP-Glycosyltransferase/glycogen phosphorylase"/>
    <property type="match status" value="1"/>
</dbReference>
<evidence type="ECO:0000255" key="1">
    <source>
        <dbReference type="HAMAP-Rule" id="MF_00033"/>
    </source>
</evidence>
<reference key="1">
    <citation type="journal article" date="2008" name="Genome Res.">
        <title>Comparative genome analysis of Salmonella enteritidis PT4 and Salmonella gallinarum 287/91 provides insights into evolutionary and host adaptation pathways.</title>
        <authorList>
            <person name="Thomson N.R."/>
            <person name="Clayton D.J."/>
            <person name="Windhorst D."/>
            <person name="Vernikos G."/>
            <person name="Davidson S."/>
            <person name="Churcher C."/>
            <person name="Quail M.A."/>
            <person name="Stevens M."/>
            <person name="Jones M.A."/>
            <person name="Watson M."/>
            <person name="Barron A."/>
            <person name="Layton A."/>
            <person name="Pickard D."/>
            <person name="Kingsley R.A."/>
            <person name="Bignell A."/>
            <person name="Clark L."/>
            <person name="Harris B."/>
            <person name="Ormond D."/>
            <person name="Abdellah Z."/>
            <person name="Brooks K."/>
            <person name="Cherevach I."/>
            <person name="Chillingworth T."/>
            <person name="Woodward J."/>
            <person name="Norberczak H."/>
            <person name="Lord A."/>
            <person name="Arrowsmith C."/>
            <person name="Jagels K."/>
            <person name="Moule S."/>
            <person name="Mungall K."/>
            <person name="Saunders M."/>
            <person name="Whitehead S."/>
            <person name="Chabalgoity J.A."/>
            <person name="Maskell D."/>
            <person name="Humphreys T."/>
            <person name="Roberts M."/>
            <person name="Barrow P.A."/>
            <person name="Dougan G."/>
            <person name="Parkhill J."/>
        </authorList>
    </citation>
    <scope>NUCLEOTIDE SEQUENCE [LARGE SCALE GENOMIC DNA]</scope>
    <source>
        <strain>P125109</strain>
    </source>
</reference>